<evidence type="ECO:0000250" key="1"/>
<evidence type="ECO:0000250" key="2">
    <source>
        <dbReference type="UniProtKB" id="P41159"/>
    </source>
</evidence>
<evidence type="ECO:0000250" key="3">
    <source>
        <dbReference type="UniProtKB" id="P41160"/>
    </source>
</evidence>
<evidence type="ECO:0000250" key="4">
    <source>
        <dbReference type="UniProtKB" id="P50596"/>
    </source>
</evidence>
<evidence type="ECO:0000255" key="5"/>
<evidence type="ECO:0000305" key="6"/>
<keyword id="KW-1015">Disulfide bond</keyword>
<keyword id="KW-0550">Obesity</keyword>
<keyword id="KW-0964">Secreted</keyword>
<keyword id="KW-0732">Signal</keyword>
<gene>
    <name type="primary">LEP</name>
    <name type="synonym">OB</name>
</gene>
<sequence>MRCGSLCRFLWLWSCLPYIEAMPIQRVQDDTKTLIKTIITRINDISPPQGVCSRPRVAGLDFIPRVQSVRTLSGMDQILATYQQILTSLQSRSVVQIANDLANLRALLRLLASAKSCPVPRARGSDTIKGLGNVLRASVHSTEVVALSRLKAALQDMLRQLDRNPGC</sequence>
<accession>Q706D0</accession>
<reference key="1">
    <citation type="submission" date="2003-12" db="EMBL/GenBank/DDBJ databases">
        <title>Cloning phocid seal leptin and its tissue specific expression.</title>
        <authorList>
            <person name="Hammond J.A."/>
            <person name="Hall A.J."/>
        </authorList>
    </citation>
    <scope>NUCLEOTIDE SEQUENCE [MRNA]</scope>
    <source>
        <tissue>Blubber</tissue>
    </source>
</reference>
<dbReference type="EMBL" id="AJ618982">
    <property type="protein sequence ID" value="CAF02066.1"/>
    <property type="molecule type" value="mRNA"/>
</dbReference>
<dbReference type="SMR" id="Q706D0"/>
<dbReference type="GO" id="GO:0005615">
    <property type="term" value="C:extracellular space"/>
    <property type="evidence" value="ECO:0007669"/>
    <property type="project" value="TreeGrafter"/>
</dbReference>
<dbReference type="GO" id="GO:0005179">
    <property type="term" value="F:hormone activity"/>
    <property type="evidence" value="ECO:0007669"/>
    <property type="project" value="InterPro"/>
</dbReference>
<dbReference type="GO" id="GO:0051428">
    <property type="term" value="F:peptide hormone receptor binding"/>
    <property type="evidence" value="ECO:0007669"/>
    <property type="project" value="TreeGrafter"/>
</dbReference>
<dbReference type="GO" id="GO:1990051">
    <property type="term" value="P:activation of protein kinase C activity"/>
    <property type="evidence" value="ECO:0000250"/>
    <property type="project" value="UniProtKB"/>
</dbReference>
<dbReference type="GO" id="GO:0098868">
    <property type="term" value="P:bone growth"/>
    <property type="evidence" value="ECO:0000250"/>
    <property type="project" value="UniProtKB"/>
</dbReference>
<dbReference type="GO" id="GO:0044320">
    <property type="term" value="P:cellular response to leptin stimulus"/>
    <property type="evidence" value="ECO:0000250"/>
    <property type="project" value="UniProtKB"/>
</dbReference>
<dbReference type="GO" id="GO:0006112">
    <property type="term" value="P:energy reserve metabolic process"/>
    <property type="evidence" value="ECO:0007669"/>
    <property type="project" value="TreeGrafter"/>
</dbReference>
<dbReference type="GO" id="GO:0050892">
    <property type="term" value="P:intestinal absorption"/>
    <property type="evidence" value="ECO:0000250"/>
    <property type="project" value="UniProtKB"/>
</dbReference>
<dbReference type="GO" id="GO:0033210">
    <property type="term" value="P:leptin-mediated signaling pathway"/>
    <property type="evidence" value="ECO:0000250"/>
    <property type="project" value="UniProtKB"/>
</dbReference>
<dbReference type="GO" id="GO:0006629">
    <property type="term" value="P:lipid metabolic process"/>
    <property type="evidence" value="ECO:0007669"/>
    <property type="project" value="TreeGrafter"/>
</dbReference>
<dbReference type="GO" id="GO:0038108">
    <property type="term" value="P:negative regulation of appetite by leptin-mediated signaling pathway"/>
    <property type="evidence" value="ECO:0000250"/>
    <property type="project" value="UniProtKB"/>
</dbReference>
<dbReference type="GO" id="GO:0010507">
    <property type="term" value="P:negative regulation of autophagy"/>
    <property type="evidence" value="ECO:0000250"/>
    <property type="project" value="UniProtKB"/>
</dbReference>
<dbReference type="GO" id="GO:0046325">
    <property type="term" value="P:negative regulation of D-glucose import"/>
    <property type="evidence" value="ECO:0000250"/>
    <property type="project" value="UniProtKB"/>
</dbReference>
<dbReference type="GO" id="GO:0006909">
    <property type="term" value="P:phagocytosis"/>
    <property type="evidence" value="ECO:0000250"/>
    <property type="project" value="UniProtKB"/>
</dbReference>
<dbReference type="GO" id="GO:0032735">
    <property type="term" value="P:positive regulation of interleukin-12 production"/>
    <property type="evidence" value="ECO:0000250"/>
    <property type="project" value="UniProtKB"/>
</dbReference>
<dbReference type="GO" id="GO:0032755">
    <property type="term" value="P:positive regulation of interleukin-6 production"/>
    <property type="evidence" value="ECO:0000250"/>
    <property type="project" value="UniProtKB"/>
</dbReference>
<dbReference type="GO" id="GO:0032757">
    <property type="term" value="P:positive regulation of interleukin-8 production"/>
    <property type="evidence" value="ECO:0000250"/>
    <property type="project" value="UniProtKB"/>
</dbReference>
<dbReference type="GO" id="GO:0043410">
    <property type="term" value="P:positive regulation of MAPK cascade"/>
    <property type="evidence" value="ECO:0000250"/>
    <property type="project" value="UniProtKB"/>
</dbReference>
<dbReference type="GO" id="GO:1900745">
    <property type="term" value="P:positive regulation of p38MAPK cascade"/>
    <property type="evidence" value="ECO:0000250"/>
    <property type="project" value="UniProtKB"/>
</dbReference>
<dbReference type="GO" id="GO:0051897">
    <property type="term" value="P:positive regulation of phosphatidylinositol 3-kinase/protein kinase B signal transduction"/>
    <property type="evidence" value="ECO:0000250"/>
    <property type="project" value="UniProtKB"/>
</dbReference>
<dbReference type="GO" id="GO:0046427">
    <property type="term" value="P:positive regulation of receptor signaling pathway via JAK-STAT"/>
    <property type="evidence" value="ECO:0000250"/>
    <property type="project" value="UniProtKB"/>
</dbReference>
<dbReference type="GO" id="GO:0042102">
    <property type="term" value="P:positive regulation of T cell proliferation"/>
    <property type="evidence" value="ECO:0000250"/>
    <property type="project" value="UniProtKB"/>
</dbReference>
<dbReference type="GO" id="GO:0032008">
    <property type="term" value="P:positive regulation of TOR signaling"/>
    <property type="evidence" value="ECO:0000250"/>
    <property type="project" value="UniProtKB"/>
</dbReference>
<dbReference type="GO" id="GO:0032760">
    <property type="term" value="P:positive regulation of tumor necrosis factor production"/>
    <property type="evidence" value="ECO:0000250"/>
    <property type="project" value="UniProtKB"/>
</dbReference>
<dbReference type="GO" id="GO:0032310">
    <property type="term" value="P:prostaglandin secretion"/>
    <property type="evidence" value="ECO:0000250"/>
    <property type="project" value="UniProtKB"/>
</dbReference>
<dbReference type="GO" id="GO:0045765">
    <property type="term" value="P:regulation of angiogenesis"/>
    <property type="evidence" value="ECO:0000250"/>
    <property type="project" value="UniProtKB"/>
</dbReference>
<dbReference type="GO" id="GO:0046850">
    <property type="term" value="P:regulation of bone remodeling"/>
    <property type="evidence" value="ECO:0000250"/>
    <property type="project" value="UniProtKB"/>
</dbReference>
<dbReference type="GO" id="GO:0090335">
    <property type="term" value="P:regulation of brown fat cell differentiation"/>
    <property type="evidence" value="ECO:0000250"/>
    <property type="project" value="UniProtKB"/>
</dbReference>
<dbReference type="GO" id="GO:0051726">
    <property type="term" value="P:regulation of cell cycle"/>
    <property type="evidence" value="ECO:0000250"/>
    <property type="project" value="UniProtKB"/>
</dbReference>
<dbReference type="GO" id="GO:1900015">
    <property type="term" value="P:regulation of cytokine production involved in inflammatory response"/>
    <property type="evidence" value="ECO:0000250"/>
    <property type="project" value="UniProtKB"/>
</dbReference>
<dbReference type="GO" id="GO:0001936">
    <property type="term" value="P:regulation of endothelial cell proliferation"/>
    <property type="evidence" value="ECO:0000250"/>
    <property type="project" value="UniProtKB"/>
</dbReference>
<dbReference type="GO" id="GO:0032814">
    <property type="term" value="P:regulation of natural killer cell activation"/>
    <property type="evidence" value="ECO:0000250"/>
    <property type="project" value="UniProtKB"/>
</dbReference>
<dbReference type="GO" id="GO:0042269">
    <property type="term" value="P:regulation of natural killer cell mediated cytotoxicity"/>
    <property type="evidence" value="ECO:0000250"/>
    <property type="project" value="UniProtKB"/>
</dbReference>
<dbReference type="GO" id="GO:0032817">
    <property type="term" value="P:regulation of natural killer cell proliferation"/>
    <property type="evidence" value="ECO:0000250"/>
    <property type="project" value="UniProtKB"/>
</dbReference>
<dbReference type="GO" id="GO:0050999">
    <property type="term" value="P:regulation of nitric-oxide synthase activity"/>
    <property type="evidence" value="ECO:0000250"/>
    <property type="project" value="UniProtKB"/>
</dbReference>
<dbReference type="GO" id="GO:0032868">
    <property type="term" value="P:response to insulin"/>
    <property type="evidence" value="ECO:0007669"/>
    <property type="project" value="TreeGrafter"/>
</dbReference>
<dbReference type="GO" id="GO:0019953">
    <property type="term" value="P:sexual reproduction"/>
    <property type="evidence" value="ECO:0000250"/>
    <property type="project" value="UniProtKB"/>
</dbReference>
<dbReference type="GO" id="GO:0030217">
    <property type="term" value="P:T cell differentiation"/>
    <property type="evidence" value="ECO:0000250"/>
    <property type="project" value="UniProtKB"/>
</dbReference>
<dbReference type="FunFam" id="1.20.1250.10:FF:000105">
    <property type="entry name" value="Leptin"/>
    <property type="match status" value="1"/>
</dbReference>
<dbReference type="Gene3D" id="1.20.1250.10">
    <property type="match status" value="1"/>
</dbReference>
<dbReference type="InterPro" id="IPR009079">
    <property type="entry name" value="4_helix_cytokine-like_core"/>
</dbReference>
<dbReference type="InterPro" id="IPR000065">
    <property type="entry name" value="Leptin"/>
</dbReference>
<dbReference type="PANTHER" id="PTHR11724">
    <property type="entry name" value="LEPTIN"/>
    <property type="match status" value="1"/>
</dbReference>
<dbReference type="PANTHER" id="PTHR11724:SF1">
    <property type="entry name" value="LEPTIN"/>
    <property type="match status" value="1"/>
</dbReference>
<dbReference type="Pfam" id="PF02024">
    <property type="entry name" value="Leptin"/>
    <property type="match status" value="1"/>
</dbReference>
<dbReference type="PIRSF" id="PIRSF001837">
    <property type="entry name" value="Leptin"/>
    <property type="match status" value="1"/>
</dbReference>
<dbReference type="PRINTS" id="PR00495">
    <property type="entry name" value="LEPTIN"/>
</dbReference>
<dbReference type="SUPFAM" id="SSF47266">
    <property type="entry name" value="4-helical cytokines"/>
    <property type="match status" value="1"/>
</dbReference>
<proteinExistence type="evidence at transcript level"/>
<protein>
    <recommendedName>
        <fullName>Leptin</fullName>
    </recommendedName>
    <alternativeName>
        <fullName>Obesity factor</fullName>
    </alternativeName>
</protein>
<comment type="function">
    <text evidence="2 3 4">Key player in the regulation of energy balance and body weight control. Once released into the circulation, has central and peripheral effects by binding LEPR, found in many tissues, which results in the activation of several major signaling pathways (By similarity). In the hypothalamus, acts as an appetite-regulating factor that induces a decrease in food intake and an increase in energy consumption by inducing anorexinogenic factors and suppressing orexigenic neuropeptides, also regulates bone mass and secretion of hypothalamo-pituitary-adrenal hormones. In the periphery, increases basal metabolism, influences reproductive function, regulates pancreatic beta-cell function and insulin secretion, is pro-angiogenic for endothelial cell and affects innate and adaptive immunity (By similarity). In the arcuate nucleus of the hypothalamus, activates by depolarization POMC neurons inducing FOS and SOCS3 expression to release anorexigenic peptides and inhibits by hyperpolarization NPY neurons inducing SOCS3 with a consequent reduction on release of orexigenic peptides (By similarity). In addition to its known satiety inducing effect, has a modulatory role in nutrient absorption. In the intestine, reduces glucose absorption by enterocytes by activating PKC and leading to a sequential activation of p38, PI3K and ERK signaling pathways which exerts an inhibitory effect on glucose absorption (By similarity). Acts as a growth factor on certain tissues, through the activation of different signaling pathways increases expression of genes involved in cell cycle regulation such as CCND1, via JAK2-STAT3 pathway, or VEGFA, via MAPK1/3 and PI3K-AKT1 pathways (By similarity). May also play an apoptotic role via JAK2-STAT3 pathway and up-regulation of BIRC5 expression. Pro-angiogenic, has mitogenic activity on vascular endothelial cells and plays a role in matrix remodeling by regulating the expression of matrix metalloproteinases (MMPs) and tissue inhibitors of metalloproteinases (TIMPs). In innate immunity, modulates the activity and function of neutrophils by increasing chemotaxis and the secretion of oxygen radicals. Increases phagocytosis by macrophages and enhances secretion of pro-inflammatory mediators. Increases cytotoxic ability of NK cells. Plays a pro-inflammatory role, in synergy with IL1B, by inducing NOS2 which promotes the production of IL6, IL8 and Prostaglandin E2, through a signaling pathway that involves JAK2, PI3K, MAP2K1/MEK1 and MAPK14/p38 (By similarity). In adaptive immunity, promotes the switch of memory T-cells towards T helper-1 cell immune responses (By similarity). Increases CD4(+)CD25(-) T-cell proliferation and reduces autophagy during TCR (T-cell receptor) stimulation, through MTOR signaling pathway activation and BCL2 up-regulation (By similarity).</text>
</comment>
<comment type="subcellular location">
    <subcellularLocation>
        <location evidence="2">Secreted</location>
    </subcellularLocation>
</comment>
<comment type="similarity">
    <text evidence="6">Belongs to the leptin family.</text>
</comment>
<feature type="signal peptide" evidence="5">
    <location>
        <begin position="1"/>
        <end position="21"/>
    </location>
</feature>
<feature type="chain" id="PRO_0000017683" description="Leptin">
    <location>
        <begin position="22"/>
        <end position="167"/>
    </location>
</feature>
<feature type="disulfide bond" evidence="1">
    <location>
        <begin position="117"/>
        <end position="167"/>
    </location>
</feature>
<name>LEP_HALGR</name>
<organism>
    <name type="scientific">Halichoerus grypus</name>
    <name type="common">Gray seal</name>
    <name type="synonym">Phoca grypus</name>
    <dbReference type="NCBI Taxonomy" id="9711"/>
    <lineage>
        <taxon>Eukaryota</taxon>
        <taxon>Metazoa</taxon>
        <taxon>Chordata</taxon>
        <taxon>Craniata</taxon>
        <taxon>Vertebrata</taxon>
        <taxon>Euteleostomi</taxon>
        <taxon>Mammalia</taxon>
        <taxon>Eutheria</taxon>
        <taxon>Laurasiatheria</taxon>
        <taxon>Carnivora</taxon>
        <taxon>Caniformia</taxon>
        <taxon>Pinnipedia</taxon>
        <taxon>Phocidae</taxon>
        <taxon>Phocinae</taxon>
        <taxon>Halichoerus</taxon>
    </lineage>
</organism>